<comment type="function">
    <text evidence="1">Produces ATP from ADP in the presence of a proton gradient across the membrane.</text>
</comment>
<comment type="subunit">
    <text evidence="1">F-type ATPases have 2 components, CF(1) - the catalytic core - and CF(0) - the membrane proton channel. CF(1) has five subunits: alpha(3), beta(3), gamma(1), delta(1), epsilon(1). CF(0) has three main subunits: a, b and c.</text>
</comment>
<comment type="subcellular location">
    <subcellularLocation>
        <location evidence="1">Cell inner membrane</location>
        <topology evidence="1">Peripheral membrane protein</topology>
    </subcellularLocation>
</comment>
<comment type="similarity">
    <text evidence="1">Belongs to the ATPase epsilon chain family.</text>
</comment>
<feature type="chain" id="PRO_1000056454" description="ATP synthase epsilon chain">
    <location>
        <begin position="1"/>
        <end position="141"/>
    </location>
</feature>
<dbReference type="EMBL" id="AM406670">
    <property type="protein sequence ID" value="CAL92778.1"/>
    <property type="molecule type" value="Genomic_DNA"/>
</dbReference>
<dbReference type="RefSeq" id="WP_011763896.1">
    <property type="nucleotide sequence ID" value="NC_008702.1"/>
</dbReference>
<dbReference type="SMR" id="A1K1S3"/>
<dbReference type="STRING" id="62928.azo0160"/>
<dbReference type="KEGG" id="aoa:dqs_0169"/>
<dbReference type="KEGG" id="azo:azo0160"/>
<dbReference type="eggNOG" id="COG0355">
    <property type="taxonomic scope" value="Bacteria"/>
</dbReference>
<dbReference type="HOGENOM" id="CLU_084338_2_0_4"/>
<dbReference type="OrthoDB" id="9791445at2"/>
<dbReference type="Proteomes" id="UP000002588">
    <property type="component" value="Chromosome"/>
</dbReference>
<dbReference type="GO" id="GO:0005886">
    <property type="term" value="C:plasma membrane"/>
    <property type="evidence" value="ECO:0007669"/>
    <property type="project" value="UniProtKB-SubCell"/>
</dbReference>
<dbReference type="GO" id="GO:0045259">
    <property type="term" value="C:proton-transporting ATP synthase complex"/>
    <property type="evidence" value="ECO:0007669"/>
    <property type="project" value="UniProtKB-KW"/>
</dbReference>
<dbReference type="GO" id="GO:0005524">
    <property type="term" value="F:ATP binding"/>
    <property type="evidence" value="ECO:0007669"/>
    <property type="project" value="UniProtKB-UniRule"/>
</dbReference>
<dbReference type="GO" id="GO:0046933">
    <property type="term" value="F:proton-transporting ATP synthase activity, rotational mechanism"/>
    <property type="evidence" value="ECO:0007669"/>
    <property type="project" value="UniProtKB-UniRule"/>
</dbReference>
<dbReference type="CDD" id="cd12152">
    <property type="entry name" value="F1-ATPase_delta"/>
    <property type="match status" value="1"/>
</dbReference>
<dbReference type="FunFam" id="1.20.5.440:FF:000001">
    <property type="entry name" value="ATP synthase epsilon chain"/>
    <property type="match status" value="1"/>
</dbReference>
<dbReference type="FunFam" id="2.60.15.10:FF:000001">
    <property type="entry name" value="ATP synthase epsilon chain"/>
    <property type="match status" value="1"/>
</dbReference>
<dbReference type="Gene3D" id="1.20.5.440">
    <property type="entry name" value="ATP synthase delta/epsilon subunit, C-terminal domain"/>
    <property type="match status" value="1"/>
</dbReference>
<dbReference type="Gene3D" id="2.60.15.10">
    <property type="entry name" value="F0F1 ATP synthase delta/epsilon subunit, N-terminal"/>
    <property type="match status" value="1"/>
</dbReference>
<dbReference type="HAMAP" id="MF_00530">
    <property type="entry name" value="ATP_synth_epsil_bac"/>
    <property type="match status" value="1"/>
</dbReference>
<dbReference type="InterPro" id="IPR036794">
    <property type="entry name" value="ATP_F1_dsu/esu_C_sf"/>
</dbReference>
<dbReference type="InterPro" id="IPR001469">
    <property type="entry name" value="ATP_synth_F1_dsu/esu"/>
</dbReference>
<dbReference type="InterPro" id="IPR020546">
    <property type="entry name" value="ATP_synth_F1_dsu/esu_N"/>
</dbReference>
<dbReference type="InterPro" id="IPR020547">
    <property type="entry name" value="ATP_synth_F1_esu_C"/>
</dbReference>
<dbReference type="InterPro" id="IPR036771">
    <property type="entry name" value="ATPsynth_dsu/esu_N"/>
</dbReference>
<dbReference type="NCBIfam" id="TIGR01216">
    <property type="entry name" value="ATP_synt_epsi"/>
    <property type="match status" value="1"/>
</dbReference>
<dbReference type="NCBIfam" id="NF001847">
    <property type="entry name" value="PRK00571.1-4"/>
    <property type="match status" value="1"/>
</dbReference>
<dbReference type="PANTHER" id="PTHR13822">
    <property type="entry name" value="ATP SYNTHASE DELTA/EPSILON CHAIN"/>
    <property type="match status" value="1"/>
</dbReference>
<dbReference type="PANTHER" id="PTHR13822:SF10">
    <property type="entry name" value="ATP SYNTHASE EPSILON CHAIN, CHLOROPLASTIC"/>
    <property type="match status" value="1"/>
</dbReference>
<dbReference type="Pfam" id="PF00401">
    <property type="entry name" value="ATP-synt_DE"/>
    <property type="match status" value="1"/>
</dbReference>
<dbReference type="Pfam" id="PF02823">
    <property type="entry name" value="ATP-synt_DE_N"/>
    <property type="match status" value="1"/>
</dbReference>
<dbReference type="SUPFAM" id="SSF46604">
    <property type="entry name" value="Epsilon subunit of F1F0-ATP synthase C-terminal domain"/>
    <property type="match status" value="1"/>
</dbReference>
<dbReference type="SUPFAM" id="SSF51344">
    <property type="entry name" value="Epsilon subunit of F1F0-ATP synthase N-terminal domain"/>
    <property type="match status" value="1"/>
</dbReference>
<evidence type="ECO:0000255" key="1">
    <source>
        <dbReference type="HAMAP-Rule" id="MF_00530"/>
    </source>
</evidence>
<keyword id="KW-0066">ATP synthesis</keyword>
<keyword id="KW-0997">Cell inner membrane</keyword>
<keyword id="KW-1003">Cell membrane</keyword>
<keyword id="KW-0139">CF(1)</keyword>
<keyword id="KW-0375">Hydrogen ion transport</keyword>
<keyword id="KW-0406">Ion transport</keyword>
<keyword id="KW-0472">Membrane</keyword>
<keyword id="KW-1185">Reference proteome</keyword>
<keyword id="KW-0813">Transport</keyword>
<gene>
    <name evidence="1" type="primary">atpC</name>
    <name type="ordered locus">azo0160</name>
</gene>
<proteinExistence type="inferred from homology"/>
<name>ATPE_AZOSB</name>
<organism>
    <name type="scientific">Azoarcus sp. (strain BH72)</name>
    <dbReference type="NCBI Taxonomy" id="418699"/>
    <lineage>
        <taxon>Bacteria</taxon>
        <taxon>Pseudomonadati</taxon>
        <taxon>Pseudomonadota</taxon>
        <taxon>Betaproteobacteria</taxon>
        <taxon>Rhodocyclales</taxon>
        <taxon>Zoogloeaceae</taxon>
        <taxon>Azoarcus</taxon>
    </lineage>
</organism>
<protein>
    <recommendedName>
        <fullName evidence="1">ATP synthase epsilon chain</fullName>
    </recommendedName>
    <alternativeName>
        <fullName evidence="1">ATP synthase F1 sector epsilon subunit</fullName>
    </alternativeName>
    <alternativeName>
        <fullName evidence="1">F-ATPase epsilon subunit</fullName>
    </alternativeName>
</protein>
<sequence>MAMTVHVDIVSAEEQIFSGLAEFVALPGEAGELGILPGHMPLMTRIKPGAVRVKVQNQAEEEVVFVAGGLLEVQPGLVTVLADTAIRGKDLDEAKALEAKRKAEEALANQSSQLDYAKAQAELAEAIAQIAAIQRLKKGIH</sequence>
<reference key="1">
    <citation type="journal article" date="2006" name="Nat. Biotechnol.">
        <title>Complete genome of the mutualistic, N2-fixing grass endophyte Azoarcus sp. strain BH72.</title>
        <authorList>
            <person name="Krause A."/>
            <person name="Ramakumar A."/>
            <person name="Bartels D."/>
            <person name="Battistoni F."/>
            <person name="Bekel T."/>
            <person name="Boch J."/>
            <person name="Boehm M."/>
            <person name="Friedrich F."/>
            <person name="Hurek T."/>
            <person name="Krause L."/>
            <person name="Linke B."/>
            <person name="McHardy A.C."/>
            <person name="Sarkar A."/>
            <person name="Schneiker S."/>
            <person name="Syed A.A."/>
            <person name="Thauer R."/>
            <person name="Vorhoelter F.-J."/>
            <person name="Weidner S."/>
            <person name="Puehler A."/>
            <person name="Reinhold-Hurek B."/>
            <person name="Kaiser O."/>
            <person name="Goesmann A."/>
        </authorList>
    </citation>
    <scope>NUCLEOTIDE SEQUENCE [LARGE SCALE GENOMIC DNA]</scope>
    <source>
        <strain>BH72</strain>
    </source>
</reference>
<accession>A1K1S3</accession>